<reference evidence="5" key="1">
    <citation type="submission" date="2001-10" db="UniProtKB">
        <authorList>
            <person name="Apte S.K."/>
            <person name="Uhlemann E."/>
            <person name="Schmid R."/>
            <person name="Altendorf K."/>
        </authorList>
    </citation>
    <scope>PROTEIN SEQUENCE OF 2-21</scope>
</reference>
<sequence length="21" mass="2221">MVKTPITEAIAAADTQGRFLS</sequence>
<proteinExistence type="evidence at protein level"/>
<organism>
    <name type="scientific">Anabaena sp. (strain L31)</name>
    <dbReference type="NCBI Taxonomy" id="29412"/>
    <lineage>
        <taxon>Bacteria</taxon>
        <taxon>Bacillati</taxon>
        <taxon>Cyanobacteriota</taxon>
        <taxon>Cyanophyceae</taxon>
        <taxon>Nostocales</taxon>
        <taxon>Nostocaceae</taxon>
        <taxon>Anabaena</taxon>
    </lineage>
</organism>
<feature type="initiator methionine" description="Removed" evidence="4">
    <location>
        <position position="1"/>
    </location>
</feature>
<feature type="chain" id="PRO_0000262932" description="C-phycocyanin alpha subunit">
    <location>
        <begin position="2"/>
        <end position="21" status="greater than"/>
    </location>
</feature>
<feature type="non-terminal residue">
    <location>
        <position position="21"/>
    </location>
</feature>
<dbReference type="GO" id="GO:0030089">
    <property type="term" value="C:phycobilisome"/>
    <property type="evidence" value="ECO:0007669"/>
    <property type="project" value="UniProtKB-KW"/>
</dbReference>
<dbReference type="GO" id="GO:0031676">
    <property type="term" value="C:plasma membrane-derived thylakoid membrane"/>
    <property type="evidence" value="ECO:0007669"/>
    <property type="project" value="UniProtKB-SubCell"/>
</dbReference>
<dbReference type="GO" id="GO:0015979">
    <property type="term" value="P:photosynthesis"/>
    <property type="evidence" value="ECO:0007669"/>
    <property type="project" value="UniProtKB-KW"/>
</dbReference>
<gene>
    <name evidence="2" type="primary">cpcA</name>
</gene>
<evidence type="ECO:0000250" key="1">
    <source>
        <dbReference type="UniProtKB" id="P13530"/>
    </source>
</evidence>
<evidence type="ECO:0000250" key="2">
    <source>
        <dbReference type="UniProtKB" id="P84340"/>
    </source>
</evidence>
<evidence type="ECO:0000255" key="3"/>
<evidence type="ECO:0000269" key="4">
    <source ref="1"/>
</evidence>
<evidence type="ECO:0000305" key="5"/>
<accession>P83162</accession>
<protein>
    <recommendedName>
        <fullName>C-phycocyanin alpha subunit</fullName>
    </recommendedName>
</protein>
<keyword id="KW-0042">Antenna complex</keyword>
<keyword id="KW-0089">Bile pigment</keyword>
<keyword id="KW-0157">Chromophore</keyword>
<keyword id="KW-0903">Direct protein sequencing</keyword>
<keyword id="KW-0249">Electron transport</keyword>
<keyword id="KW-0472">Membrane</keyword>
<keyword id="KW-0602">Photosynthesis</keyword>
<keyword id="KW-0605">Phycobilisome</keyword>
<keyword id="KW-0793">Thylakoid</keyword>
<keyword id="KW-0813">Transport</keyword>
<name>PHCA_ANASL</name>
<comment type="function">
    <text>Light-harvesting photosynthetic bile pigment-protein from the phycobiliprotein complex (phycobilisome, PBS). Phycocyanin is the major phycobiliprotein in the PBS rod.</text>
</comment>
<comment type="subunit">
    <text evidence="1">Heterodimer of an alpha and a beta subunit, which further assembles into trimers and the trimers into hexamers.</text>
</comment>
<comment type="subcellular location">
    <subcellularLocation>
        <location evidence="2">Cellular thylakoid membrane</location>
        <topology evidence="2">Peripheral membrane protein</topology>
        <orientation evidence="2">Cytoplasmic side</orientation>
    </subcellularLocation>
    <text evidence="2">Part of the phycobilisome rod.</text>
</comment>
<comment type="PTM">
    <text evidence="2">Contains one covalently linked bilin chromophore.</text>
</comment>
<comment type="similarity">
    <text evidence="3">Belongs to the phycobiliprotein family.</text>
</comment>